<gene>
    <name evidence="1" type="primary">greA</name>
    <name type="ordered locus">Smed_1254</name>
</gene>
<protein>
    <recommendedName>
        <fullName evidence="1">Transcription elongation factor GreA</fullName>
    </recommendedName>
    <alternativeName>
        <fullName evidence="1">Transcript cleavage factor GreA</fullName>
    </alternativeName>
</protein>
<name>GREA_SINMW</name>
<reference key="1">
    <citation type="submission" date="2007-06" db="EMBL/GenBank/DDBJ databases">
        <title>Complete sequence of Sinorhizobium medicae WSM419 chromosome.</title>
        <authorList>
            <consortium name="US DOE Joint Genome Institute"/>
            <person name="Copeland A."/>
            <person name="Lucas S."/>
            <person name="Lapidus A."/>
            <person name="Barry K."/>
            <person name="Glavina del Rio T."/>
            <person name="Dalin E."/>
            <person name="Tice H."/>
            <person name="Pitluck S."/>
            <person name="Chain P."/>
            <person name="Malfatti S."/>
            <person name="Shin M."/>
            <person name="Vergez L."/>
            <person name="Schmutz J."/>
            <person name="Larimer F."/>
            <person name="Land M."/>
            <person name="Hauser L."/>
            <person name="Kyrpides N."/>
            <person name="Mikhailova N."/>
            <person name="Reeve W.G."/>
            <person name="Richardson P."/>
        </authorList>
    </citation>
    <scope>NUCLEOTIDE SEQUENCE [LARGE SCALE GENOMIC DNA]</scope>
    <source>
        <strain>WSM419</strain>
    </source>
</reference>
<feature type="chain" id="PRO_1000075889" description="Transcription elongation factor GreA">
    <location>
        <begin position="1"/>
        <end position="158"/>
    </location>
</feature>
<organism>
    <name type="scientific">Sinorhizobium medicae (strain WSM419)</name>
    <name type="common">Ensifer medicae</name>
    <dbReference type="NCBI Taxonomy" id="366394"/>
    <lineage>
        <taxon>Bacteria</taxon>
        <taxon>Pseudomonadati</taxon>
        <taxon>Pseudomonadota</taxon>
        <taxon>Alphaproteobacteria</taxon>
        <taxon>Hyphomicrobiales</taxon>
        <taxon>Rhizobiaceae</taxon>
        <taxon>Sinorhizobium/Ensifer group</taxon>
        <taxon>Sinorhizobium</taxon>
    </lineage>
</organism>
<accession>A6U8X4</accession>
<proteinExistence type="inferred from homology"/>
<sequence>MVDKVPMTQGGFVNLQEELRWRQQEERPRIIEAIAEARAHGDLSENAEYHAAKEAQSHNEGRISELEDLIARAEVIDLSKMSGSKIKFGARVKLVDEDTEEEKTYQIVGDQEADVKQGRISISSPIARALIGKEVGDSIEVNAPGGSKAYEILAVQWG</sequence>
<dbReference type="EMBL" id="CP000738">
    <property type="protein sequence ID" value="ABR60104.1"/>
    <property type="molecule type" value="Genomic_DNA"/>
</dbReference>
<dbReference type="RefSeq" id="WP_003529568.1">
    <property type="nucleotide sequence ID" value="NC_009636.1"/>
</dbReference>
<dbReference type="RefSeq" id="YP_001326939.1">
    <property type="nucleotide sequence ID" value="NC_009636.1"/>
</dbReference>
<dbReference type="SMR" id="A6U8X4"/>
<dbReference type="STRING" id="366394.Smed_1254"/>
<dbReference type="GeneID" id="89575899"/>
<dbReference type="KEGG" id="smd:Smed_1254"/>
<dbReference type="PATRIC" id="fig|366394.8.peg.4388"/>
<dbReference type="eggNOG" id="COG0782">
    <property type="taxonomic scope" value="Bacteria"/>
</dbReference>
<dbReference type="HOGENOM" id="CLU_101379_2_0_5"/>
<dbReference type="OrthoDB" id="9808774at2"/>
<dbReference type="Proteomes" id="UP000001108">
    <property type="component" value="Chromosome"/>
</dbReference>
<dbReference type="GO" id="GO:0003677">
    <property type="term" value="F:DNA binding"/>
    <property type="evidence" value="ECO:0007669"/>
    <property type="project" value="UniProtKB-UniRule"/>
</dbReference>
<dbReference type="GO" id="GO:0070063">
    <property type="term" value="F:RNA polymerase binding"/>
    <property type="evidence" value="ECO:0007669"/>
    <property type="project" value="InterPro"/>
</dbReference>
<dbReference type="GO" id="GO:0006354">
    <property type="term" value="P:DNA-templated transcription elongation"/>
    <property type="evidence" value="ECO:0007669"/>
    <property type="project" value="TreeGrafter"/>
</dbReference>
<dbReference type="GO" id="GO:0032784">
    <property type="term" value="P:regulation of DNA-templated transcription elongation"/>
    <property type="evidence" value="ECO:0007669"/>
    <property type="project" value="UniProtKB-UniRule"/>
</dbReference>
<dbReference type="FunFam" id="1.10.287.180:FF:000001">
    <property type="entry name" value="Transcription elongation factor GreA"/>
    <property type="match status" value="1"/>
</dbReference>
<dbReference type="FunFam" id="3.10.50.30:FF:000001">
    <property type="entry name" value="Transcription elongation factor GreA"/>
    <property type="match status" value="1"/>
</dbReference>
<dbReference type="Gene3D" id="3.10.50.30">
    <property type="entry name" value="Transcription elongation factor, GreA/GreB, C-terminal domain"/>
    <property type="match status" value="1"/>
</dbReference>
<dbReference type="Gene3D" id="1.10.287.180">
    <property type="entry name" value="Transcription elongation factor, GreA/GreB, N-terminal domain"/>
    <property type="match status" value="1"/>
</dbReference>
<dbReference type="HAMAP" id="MF_00105">
    <property type="entry name" value="GreA_GreB"/>
    <property type="match status" value="1"/>
</dbReference>
<dbReference type="InterPro" id="IPR036953">
    <property type="entry name" value="GreA/GreB_C_sf"/>
</dbReference>
<dbReference type="InterPro" id="IPR018151">
    <property type="entry name" value="TF_GreA/GreB_CS"/>
</dbReference>
<dbReference type="InterPro" id="IPR006359">
    <property type="entry name" value="Tscrpt_elong_fac_GreA"/>
</dbReference>
<dbReference type="InterPro" id="IPR028624">
    <property type="entry name" value="Tscrpt_elong_fac_GreA/B"/>
</dbReference>
<dbReference type="InterPro" id="IPR001437">
    <property type="entry name" value="Tscrpt_elong_fac_GreA/B_C"/>
</dbReference>
<dbReference type="InterPro" id="IPR023459">
    <property type="entry name" value="Tscrpt_elong_fac_GreA/B_fam"/>
</dbReference>
<dbReference type="InterPro" id="IPR022691">
    <property type="entry name" value="Tscrpt_elong_fac_GreA/B_N"/>
</dbReference>
<dbReference type="InterPro" id="IPR036805">
    <property type="entry name" value="Tscrpt_elong_fac_GreA/B_N_sf"/>
</dbReference>
<dbReference type="NCBIfam" id="TIGR01462">
    <property type="entry name" value="greA"/>
    <property type="match status" value="1"/>
</dbReference>
<dbReference type="NCBIfam" id="NF001261">
    <property type="entry name" value="PRK00226.1-2"/>
    <property type="match status" value="1"/>
</dbReference>
<dbReference type="NCBIfam" id="NF001263">
    <property type="entry name" value="PRK00226.1-4"/>
    <property type="match status" value="1"/>
</dbReference>
<dbReference type="NCBIfam" id="NF001264">
    <property type="entry name" value="PRK00226.1-5"/>
    <property type="match status" value="1"/>
</dbReference>
<dbReference type="PANTHER" id="PTHR30437">
    <property type="entry name" value="TRANSCRIPTION ELONGATION FACTOR GREA"/>
    <property type="match status" value="1"/>
</dbReference>
<dbReference type="PANTHER" id="PTHR30437:SF4">
    <property type="entry name" value="TRANSCRIPTION ELONGATION FACTOR GREA"/>
    <property type="match status" value="1"/>
</dbReference>
<dbReference type="Pfam" id="PF01272">
    <property type="entry name" value="GreA_GreB"/>
    <property type="match status" value="1"/>
</dbReference>
<dbReference type="Pfam" id="PF03449">
    <property type="entry name" value="GreA_GreB_N"/>
    <property type="match status" value="1"/>
</dbReference>
<dbReference type="PIRSF" id="PIRSF006092">
    <property type="entry name" value="GreA_GreB"/>
    <property type="match status" value="1"/>
</dbReference>
<dbReference type="SUPFAM" id="SSF54534">
    <property type="entry name" value="FKBP-like"/>
    <property type="match status" value="1"/>
</dbReference>
<dbReference type="SUPFAM" id="SSF46557">
    <property type="entry name" value="GreA transcript cleavage protein, N-terminal domain"/>
    <property type="match status" value="1"/>
</dbReference>
<dbReference type="PROSITE" id="PS00829">
    <property type="entry name" value="GREAB_1"/>
    <property type="match status" value="1"/>
</dbReference>
<dbReference type="PROSITE" id="PS00830">
    <property type="entry name" value="GREAB_2"/>
    <property type="match status" value="1"/>
</dbReference>
<evidence type="ECO:0000255" key="1">
    <source>
        <dbReference type="HAMAP-Rule" id="MF_00105"/>
    </source>
</evidence>
<comment type="function">
    <text evidence="1">Necessary for efficient RNA polymerase transcription elongation past template-encoded arresting sites. The arresting sites in DNA have the property of trapping a certain fraction of elongating RNA polymerases that pass through, resulting in locked ternary complexes. Cleavage of the nascent transcript by cleavage factors such as GreA or GreB allows the resumption of elongation from the new 3'terminus. GreA releases sequences of 2 to 3 nucleotides.</text>
</comment>
<comment type="similarity">
    <text evidence="1">Belongs to the GreA/GreB family.</text>
</comment>
<keyword id="KW-0238">DNA-binding</keyword>
<keyword id="KW-0804">Transcription</keyword>
<keyword id="KW-0805">Transcription regulation</keyword>